<gene>
    <name evidence="6" type="primary">Clps</name>
</gene>
<dbReference type="EMBL" id="M33333">
    <property type="protein sequence ID" value="AAA40943.1"/>
    <property type="molecule type" value="mRNA"/>
</dbReference>
<dbReference type="EMBL" id="M58370">
    <property type="protein sequence ID" value="AAA20505.1"/>
    <property type="molecule type" value="mRNA"/>
</dbReference>
<dbReference type="PIR" id="I51909">
    <property type="entry name" value="I51909"/>
</dbReference>
<dbReference type="RefSeq" id="NP_037271.1">
    <property type="nucleotide sequence ID" value="NM_013139.1"/>
</dbReference>
<dbReference type="SMR" id="P17084"/>
<dbReference type="FunCoup" id="P17084">
    <property type="interactions" value="39"/>
</dbReference>
<dbReference type="STRING" id="10116.ENSRNOP00000073599"/>
<dbReference type="PhosphoSitePlus" id="P17084"/>
<dbReference type="PaxDb" id="10116-ENSRNOP00000000611"/>
<dbReference type="GeneID" id="25680"/>
<dbReference type="KEGG" id="rno:25680"/>
<dbReference type="UCSC" id="RGD:2363">
    <property type="organism name" value="rat"/>
</dbReference>
<dbReference type="AGR" id="RGD:2363"/>
<dbReference type="CTD" id="1208"/>
<dbReference type="RGD" id="2363">
    <property type="gene designation" value="Clps"/>
</dbReference>
<dbReference type="eggNOG" id="ENOG502S4NY">
    <property type="taxonomic scope" value="Eukaryota"/>
</dbReference>
<dbReference type="InParanoid" id="P17084"/>
<dbReference type="PhylomeDB" id="P17084"/>
<dbReference type="Reactome" id="R-RNO-192456">
    <property type="pathway name" value="Digestion of dietary lipid"/>
</dbReference>
<dbReference type="Reactome" id="R-RNO-975634">
    <property type="pathway name" value="Retinoid metabolism and transport"/>
</dbReference>
<dbReference type="PRO" id="PR:P17084"/>
<dbReference type="Proteomes" id="UP000002494">
    <property type="component" value="Unplaced"/>
</dbReference>
<dbReference type="GO" id="GO:0005576">
    <property type="term" value="C:extracellular region"/>
    <property type="evidence" value="ECO:0007669"/>
    <property type="project" value="UniProtKB-SubCell"/>
</dbReference>
<dbReference type="GO" id="GO:0008047">
    <property type="term" value="F:enzyme activator activity"/>
    <property type="evidence" value="ECO:0000314"/>
    <property type="project" value="RGD"/>
</dbReference>
<dbReference type="GO" id="GO:0035473">
    <property type="term" value="F:lipase binding"/>
    <property type="evidence" value="ECO:0007669"/>
    <property type="project" value="InterPro"/>
</dbReference>
<dbReference type="GO" id="GO:0007586">
    <property type="term" value="P:digestion"/>
    <property type="evidence" value="ECO:0007669"/>
    <property type="project" value="UniProtKB-KW"/>
</dbReference>
<dbReference type="GO" id="GO:0016042">
    <property type="term" value="P:lipid catabolic process"/>
    <property type="evidence" value="ECO:0007669"/>
    <property type="project" value="UniProtKB-KW"/>
</dbReference>
<dbReference type="GO" id="GO:0009791">
    <property type="term" value="P:post-embryonic development"/>
    <property type="evidence" value="ECO:0000270"/>
    <property type="project" value="RGD"/>
</dbReference>
<dbReference type="GO" id="GO:0009617">
    <property type="term" value="P:response to bacterium"/>
    <property type="evidence" value="ECO:0000266"/>
    <property type="project" value="RGD"/>
</dbReference>
<dbReference type="GO" id="GO:0032094">
    <property type="term" value="P:response to food"/>
    <property type="evidence" value="ECO:0000270"/>
    <property type="project" value="RGD"/>
</dbReference>
<dbReference type="GO" id="GO:0001523">
    <property type="term" value="P:retinoid metabolic process"/>
    <property type="evidence" value="ECO:0000266"/>
    <property type="project" value="RGD"/>
</dbReference>
<dbReference type="CDD" id="cd23011">
    <property type="entry name" value="CLPS"/>
    <property type="match status" value="1"/>
</dbReference>
<dbReference type="FunFam" id="2.10.80.10:FF:000005">
    <property type="entry name" value="Colipase"/>
    <property type="match status" value="1"/>
</dbReference>
<dbReference type="Gene3D" id="2.10.80.10">
    <property type="entry name" value="Lipase, subunit A"/>
    <property type="match status" value="1"/>
</dbReference>
<dbReference type="InterPro" id="IPR047576">
    <property type="entry name" value="CLPS_chr"/>
</dbReference>
<dbReference type="InterPro" id="IPR001981">
    <property type="entry name" value="Colipase"/>
</dbReference>
<dbReference type="InterPro" id="IPR017914">
    <property type="entry name" value="Colipase_C"/>
</dbReference>
<dbReference type="InterPro" id="IPR017915">
    <property type="entry name" value="Colipase_CS"/>
</dbReference>
<dbReference type="InterPro" id="IPR017913">
    <property type="entry name" value="Colipase_N"/>
</dbReference>
<dbReference type="PANTHER" id="PTHR10041">
    <property type="entry name" value="COLIPASE"/>
    <property type="match status" value="1"/>
</dbReference>
<dbReference type="PANTHER" id="PTHR10041:SF8">
    <property type="entry name" value="COLIPASE"/>
    <property type="match status" value="1"/>
</dbReference>
<dbReference type="Pfam" id="PF01114">
    <property type="entry name" value="Colipase"/>
    <property type="match status" value="1"/>
</dbReference>
<dbReference type="Pfam" id="PF02740">
    <property type="entry name" value="Colipase_C"/>
    <property type="match status" value="1"/>
</dbReference>
<dbReference type="PRINTS" id="PR00128">
    <property type="entry name" value="COLIPASE"/>
</dbReference>
<dbReference type="SMART" id="SM00023">
    <property type="entry name" value="COLIPASE"/>
    <property type="match status" value="1"/>
</dbReference>
<dbReference type="SUPFAM" id="SSF57190">
    <property type="entry name" value="Colipase-like"/>
    <property type="match status" value="2"/>
</dbReference>
<dbReference type="PROSITE" id="PS00121">
    <property type="entry name" value="COLIPASE_1"/>
    <property type="match status" value="1"/>
</dbReference>
<dbReference type="PROSITE" id="PS51342">
    <property type="entry name" value="COLIPASE_2"/>
    <property type="match status" value="1"/>
</dbReference>
<proteinExistence type="evidence at transcript level"/>
<keyword id="KW-0222">Digestion</keyword>
<keyword id="KW-1015">Disulfide bond</keyword>
<keyword id="KW-0442">Lipid degradation</keyword>
<keyword id="KW-0443">Lipid metabolism</keyword>
<keyword id="KW-1185">Reference proteome</keyword>
<keyword id="KW-0964">Secreted</keyword>
<keyword id="KW-0732">Signal</keyword>
<evidence type="ECO:0000255" key="1"/>
<evidence type="ECO:0000255" key="2">
    <source>
        <dbReference type="PROSITE-ProRule" id="PRU00674"/>
    </source>
</evidence>
<evidence type="ECO:0000269" key="3">
    <source>
    </source>
</evidence>
<evidence type="ECO:0000269" key="4">
    <source>
    </source>
</evidence>
<evidence type="ECO:0000305" key="5"/>
<evidence type="ECO:0000312" key="6">
    <source>
        <dbReference type="RGD" id="2363"/>
    </source>
</evidence>
<sequence length="112" mass="12252">MKVLVVLLVTLVAVAYAAPGPRGLFINLEDGEICVNSMQCKSRCCQHDTILGIARCTHKAMENSECSPKTLYGIYYRCPCERGLTCEGDRSIIGAITNTNYGVCLDSTRSKQ</sequence>
<comment type="function">
    <text evidence="4">Colipase is a cofactor of pancreatic lipase. It allows the lipase to anchor itself to the lipid-water interface. Without colipase the enzyme is washed off by bile salts, which have an inhibitory effect on the lipase.</text>
</comment>
<comment type="function">
    <text evidence="5">Enterostatin has a biological activity as a satiety signal.</text>
</comment>
<comment type="subunit">
    <text evidence="2">Forms a 1:1 stoichiometric complex with pancreatic lipase.</text>
</comment>
<comment type="subcellular location">
    <subcellularLocation>
        <location evidence="5">Secreted</location>
    </subcellularLocation>
</comment>
<comment type="tissue specificity">
    <text evidence="3 4">Expressed by the pancreas.</text>
</comment>
<comment type="developmental stage">
    <text evidence="4">Readily detectable during gestation, reaches adult levels by 17-20 days gestation, rises markedly at 7 days of age but falls to adult levels by 14 days and remains at that level throughout the suckling-weanling period.</text>
</comment>
<comment type="induction">
    <text evidence="3">Expression levels increase upon lipid ingestion.</text>
</comment>
<comment type="similarity">
    <text evidence="2">Belongs to the colipase family.</text>
</comment>
<protein>
    <recommendedName>
        <fullName evidence="5">Colipase</fullName>
    </recommendedName>
</protein>
<organism>
    <name type="scientific">Rattus norvegicus</name>
    <name type="common">Rat</name>
    <dbReference type="NCBI Taxonomy" id="10116"/>
    <lineage>
        <taxon>Eukaryota</taxon>
        <taxon>Metazoa</taxon>
        <taxon>Chordata</taxon>
        <taxon>Craniata</taxon>
        <taxon>Vertebrata</taxon>
        <taxon>Euteleostomi</taxon>
        <taxon>Mammalia</taxon>
        <taxon>Eutheria</taxon>
        <taxon>Euarchontoglires</taxon>
        <taxon>Glires</taxon>
        <taxon>Rodentia</taxon>
        <taxon>Myomorpha</taxon>
        <taxon>Muroidea</taxon>
        <taxon>Muridae</taxon>
        <taxon>Murinae</taxon>
        <taxon>Rattus</taxon>
    </lineage>
</organism>
<reference key="1">
    <citation type="journal article" date="1990" name="Biochem. Biophys. Res. Commun.">
        <title>Rat pancreatic colipase mRNA: nucleotide sequence of a cDNA clone and nutritional regulation by a lipidic diet.</title>
        <authorList>
            <person name="Wicker C."/>
            <person name="Puigserver A."/>
        </authorList>
    </citation>
    <scope>NUCLEOTIDE SEQUENCE [MRNA]</scope>
    <scope>TISSUE SPECIFICITY</scope>
    <scope>INDUCTION BY LIPID INGESTION</scope>
</reference>
<reference key="2">
    <citation type="journal article" date="1994" name="Am. J. Physiol.">
        <title>Rat pancreatic lipase and two related proteins: enzymatic properties and mRNA expression during development.</title>
        <authorList>
            <person name="Payne R.M."/>
            <person name="Sims H.F."/>
            <person name="Jennens M.L."/>
            <person name="Lowe M.E."/>
        </authorList>
    </citation>
    <scope>NUCLEOTIDE SEQUENCE [MRNA]</scope>
    <scope>TISSUE SPECIFICITY</scope>
    <scope>DEVELOPMENTAL STAGE</scope>
    <scope>FUNCTION</scope>
</reference>
<name>COL_RAT</name>
<accession>P17084</accession>
<feature type="signal peptide">
    <location>
        <begin position="1"/>
        <end position="17"/>
    </location>
</feature>
<feature type="propeptide" id="PRO_0000005706" description="Enterostatin, activation peptide" evidence="1">
    <location>
        <begin position="18"/>
        <end position="22"/>
    </location>
</feature>
<feature type="chain" id="PRO_0000005707" description="Colipase">
    <location>
        <begin position="23"/>
        <end position="112"/>
    </location>
</feature>
<feature type="disulfide bond" evidence="2">
    <location>
        <begin position="34"/>
        <end position="45"/>
    </location>
</feature>
<feature type="disulfide bond" evidence="2">
    <location>
        <begin position="40"/>
        <end position="56"/>
    </location>
</feature>
<feature type="disulfide bond" evidence="2">
    <location>
        <begin position="44"/>
        <end position="78"/>
    </location>
</feature>
<feature type="disulfide bond" evidence="2">
    <location>
        <begin position="66"/>
        <end position="86"/>
    </location>
</feature>
<feature type="disulfide bond" evidence="2">
    <location>
        <begin position="80"/>
        <end position="104"/>
    </location>
</feature>
<feature type="sequence conflict" description="In Ref. 1; AAA40943." evidence="5" ref="1">
    <original>A</original>
    <variation>V</variation>
    <location>
        <position position="18"/>
    </location>
</feature>